<keyword id="KW-0030">Aminoacyl-tRNA synthetase</keyword>
<keyword id="KW-0067">ATP-binding</keyword>
<keyword id="KW-0963">Cytoplasm</keyword>
<keyword id="KW-0436">Ligase</keyword>
<keyword id="KW-0547">Nucleotide-binding</keyword>
<keyword id="KW-0648">Protein biosynthesis</keyword>
<keyword id="KW-1185">Reference proteome</keyword>
<feature type="chain" id="PRO_1000101367" description="Glycine--tRNA ligase beta subunit">
    <location>
        <begin position="1"/>
        <end position="701"/>
    </location>
</feature>
<evidence type="ECO:0000255" key="1">
    <source>
        <dbReference type="HAMAP-Rule" id="MF_00255"/>
    </source>
</evidence>
<gene>
    <name evidence="1" type="primary">glyS</name>
    <name type="ordered locus">Tbd_2347</name>
</gene>
<accession>Q3SGF0</accession>
<name>SYGB_THIDA</name>
<proteinExistence type="inferred from homology"/>
<protein>
    <recommendedName>
        <fullName evidence="1">Glycine--tRNA ligase beta subunit</fullName>
        <ecNumber evidence="1">6.1.1.14</ecNumber>
    </recommendedName>
    <alternativeName>
        <fullName evidence="1">Glycyl-tRNA synthetase beta subunit</fullName>
        <shortName evidence="1">GlyRS</shortName>
    </alternativeName>
</protein>
<reference key="1">
    <citation type="journal article" date="2006" name="J. Bacteriol.">
        <title>The genome sequence of the obligately chemolithoautotrophic, facultatively anaerobic bacterium Thiobacillus denitrificans.</title>
        <authorList>
            <person name="Beller H.R."/>
            <person name="Chain P.S."/>
            <person name="Letain T.E."/>
            <person name="Chakicherla A."/>
            <person name="Larimer F.W."/>
            <person name="Richardson P.M."/>
            <person name="Coleman M.A."/>
            <person name="Wood A.P."/>
            <person name="Kelly D.P."/>
        </authorList>
    </citation>
    <scope>NUCLEOTIDE SEQUENCE [LARGE SCALE GENOMIC DNA]</scope>
    <source>
        <strain>ATCC 25259 / T1</strain>
    </source>
</reference>
<dbReference type="EC" id="6.1.1.14" evidence="1"/>
<dbReference type="EMBL" id="CP000116">
    <property type="protein sequence ID" value="AAZ98300.1"/>
    <property type="molecule type" value="Genomic_DNA"/>
</dbReference>
<dbReference type="RefSeq" id="WP_011312859.1">
    <property type="nucleotide sequence ID" value="NC_007404.1"/>
</dbReference>
<dbReference type="SMR" id="Q3SGF0"/>
<dbReference type="STRING" id="292415.Tbd_2347"/>
<dbReference type="KEGG" id="tbd:Tbd_2347"/>
<dbReference type="eggNOG" id="COG0751">
    <property type="taxonomic scope" value="Bacteria"/>
</dbReference>
<dbReference type="HOGENOM" id="CLU_007220_2_2_4"/>
<dbReference type="OrthoDB" id="9775440at2"/>
<dbReference type="Proteomes" id="UP000008291">
    <property type="component" value="Chromosome"/>
</dbReference>
<dbReference type="GO" id="GO:0005829">
    <property type="term" value="C:cytosol"/>
    <property type="evidence" value="ECO:0007669"/>
    <property type="project" value="TreeGrafter"/>
</dbReference>
<dbReference type="GO" id="GO:0004814">
    <property type="term" value="F:arginine-tRNA ligase activity"/>
    <property type="evidence" value="ECO:0007669"/>
    <property type="project" value="InterPro"/>
</dbReference>
<dbReference type="GO" id="GO:0005524">
    <property type="term" value="F:ATP binding"/>
    <property type="evidence" value="ECO:0007669"/>
    <property type="project" value="UniProtKB-UniRule"/>
</dbReference>
<dbReference type="GO" id="GO:0004820">
    <property type="term" value="F:glycine-tRNA ligase activity"/>
    <property type="evidence" value="ECO:0007669"/>
    <property type="project" value="UniProtKB-UniRule"/>
</dbReference>
<dbReference type="GO" id="GO:0006420">
    <property type="term" value="P:arginyl-tRNA aminoacylation"/>
    <property type="evidence" value="ECO:0007669"/>
    <property type="project" value="InterPro"/>
</dbReference>
<dbReference type="GO" id="GO:0006426">
    <property type="term" value="P:glycyl-tRNA aminoacylation"/>
    <property type="evidence" value="ECO:0007669"/>
    <property type="project" value="UniProtKB-UniRule"/>
</dbReference>
<dbReference type="HAMAP" id="MF_00255">
    <property type="entry name" value="Gly_tRNA_synth_beta"/>
    <property type="match status" value="1"/>
</dbReference>
<dbReference type="InterPro" id="IPR008909">
    <property type="entry name" value="DALR_anticod-bd"/>
</dbReference>
<dbReference type="InterPro" id="IPR015944">
    <property type="entry name" value="Gly-tRNA-synth_bsu"/>
</dbReference>
<dbReference type="InterPro" id="IPR006194">
    <property type="entry name" value="Gly-tRNA-synth_heterodimer"/>
</dbReference>
<dbReference type="NCBIfam" id="TIGR00211">
    <property type="entry name" value="glyS"/>
    <property type="match status" value="1"/>
</dbReference>
<dbReference type="PANTHER" id="PTHR30075:SF2">
    <property type="entry name" value="GLYCINE--TRNA LIGASE, CHLOROPLASTIC_MITOCHONDRIAL 2"/>
    <property type="match status" value="1"/>
</dbReference>
<dbReference type="PANTHER" id="PTHR30075">
    <property type="entry name" value="GLYCYL-TRNA SYNTHETASE"/>
    <property type="match status" value="1"/>
</dbReference>
<dbReference type="Pfam" id="PF05746">
    <property type="entry name" value="DALR_1"/>
    <property type="match status" value="1"/>
</dbReference>
<dbReference type="Pfam" id="PF02092">
    <property type="entry name" value="tRNA_synt_2f"/>
    <property type="match status" value="1"/>
</dbReference>
<dbReference type="PRINTS" id="PR01045">
    <property type="entry name" value="TRNASYNTHGB"/>
</dbReference>
<dbReference type="SUPFAM" id="SSF109604">
    <property type="entry name" value="HD-domain/PDEase-like"/>
    <property type="match status" value="1"/>
</dbReference>
<dbReference type="PROSITE" id="PS50861">
    <property type="entry name" value="AA_TRNA_LIGASE_II_GLYAB"/>
    <property type="match status" value="1"/>
</dbReference>
<sequence length="701" mass="74976">MTTANLLVELFVEELPPKALKKLGEAFAAALTESLVAQGLVHAQAAVTHFASPRRLGAHIENVLERSADKPVSTKLMPVSVGLDADGNATPALLKRLAALGADASAVATLRRESDGKAEALFMDSVAKGISLGLGLAKALWESLDKLPIPKVMSYQLADGWSTVNFVRPVHGLVALHGTDPVDVRMFGLTAGRKTHGHRFEAAADPIVLKDADSYAQQLESEGAVIANFAERRAEIVRQLEAAAAPLGLVPVEDEALLDEVTALVERPNVLLGQFEQAFLEVPQECLILTMKANQKYFPLLDAAGKLTNKFLIVSNISPADASAVVGGNERVVRPRLADAKFFFDQDRKKTLDARVLGLAKVVYHNKLGTQGERVTRVQAVARAIGEKLGGEALALKADQAALLAKADLLTDMVGEFPELQGVMGRYYAQHDGVADDVAFAIEDHYRPRFAGDDLPRNPVGVCVALADKLETLVGLFGIGEKPTGDKDPFALRRHALGVVRMLIEKHLPIGLNELVSIAFSAFQQGLLGQAHTDVYLFMFERLSGAMREQGYSANEVDAVLSLNPIRIDLVPQQLEAVRAFAALPEAAALAAANKRVGNILKKAEGEVGASADPGRFVEAAERALFAALDEVAPRAAAAFGSGDYTASLQALAALKAPVDAFFDQVMVNADDPALRANRLALLNQLHRTMNRVADISRLAA</sequence>
<organism>
    <name type="scientific">Thiobacillus denitrificans (strain ATCC 25259 / T1)</name>
    <dbReference type="NCBI Taxonomy" id="292415"/>
    <lineage>
        <taxon>Bacteria</taxon>
        <taxon>Pseudomonadati</taxon>
        <taxon>Pseudomonadota</taxon>
        <taxon>Betaproteobacteria</taxon>
        <taxon>Nitrosomonadales</taxon>
        <taxon>Thiobacillaceae</taxon>
        <taxon>Thiobacillus</taxon>
    </lineage>
</organism>
<comment type="catalytic activity">
    <reaction evidence="1">
        <text>tRNA(Gly) + glycine + ATP = glycyl-tRNA(Gly) + AMP + diphosphate</text>
        <dbReference type="Rhea" id="RHEA:16013"/>
        <dbReference type="Rhea" id="RHEA-COMP:9664"/>
        <dbReference type="Rhea" id="RHEA-COMP:9683"/>
        <dbReference type="ChEBI" id="CHEBI:30616"/>
        <dbReference type="ChEBI" id="CHEBI:33019"/>
        <dbReference type="ChEBI" id="CHEBI:57305"/>
        <dbReference type="ChEBI" id="CHEBI:78442"/>
        <dbReference type="ChEBI" id="CHEBI:78522"/>
        <dbReference type="ChEBI" id="CHEBI:456215"/>
        <dbReference type="EC" id="6.1.1.14"/>
    </reaction>
</comment>
<comment type="subunit">
    <text evidence="1">Tetramer of two alpha and two beta subunits.</text>
</comment>
<comment type="subcellular location">
    <subcellularLocation>
        <location evidence="1">Cytoplasm</location>
    </subcellularLocation>
</comment>
<comment type="similarity">
    <text evidence="1">Belongs to the class-II aminoacyl-tRNA synthetase family.</text>
</comment>